<feature type="chain" id="PRO_1000100736" description="Arginine deiminase">
    <location>
        <begin position="1"/>
        <end position="409"/>
    </location>
</feature>
<feature type="active site" description="Amidino-cysteine intermediate" evidence="1">
    <location>
        <position position="399"/>
    </location>
</feature>
<keyword id="KW-0056">Arginine metabolism</keyword>
<keyword id="KW-0963">Cytoplasm</keyword>
<keyword id="KW-0378">Hydrolase</keyword>
<gene>
    <name evidence="1" type="primary">arcA</name>
    <name type="ordered locus">BRE_852</name>
</gene>
<organism>
    <name type="scientific">Borrelia recurrentis (strain A1)</name>
    <dbReference type="NCBI Taxonomy" id="412418"/>
    <lineage>
        <taxon>Bacteria</taxon>
        <taxon>Pseudomonadati</taxon>
        <taxon>Spirochaetota</taxon>
        <taxon>Spirochaetia</taxon>
        <taxon>Spirochaetales</taxon>
        <taxon>Borreliaceae</taxon>
        <taxon>Borrelia</taxon>
    </lineage>
</organism>
<comment type="catalytic activity">
    <reaction evidence="1">
        <text>L-arginine + H2O = L-citrulline + NH4(+)</text>
        <dbReference type="Rhea" id="RHEA:19597"/>
        <dbReference type="ChEBI" id="CHEBI:15377"/>
        <dbReference type="ChEBI" id="CHEBI:28938"/>
        <dbReference type="ChEBI" id="CHEBI:32682"/>
        <dbReference type="ChEBI" id="CHEBI:57743"/>
        <dbReference type="EC" id="3.5.3.6"/>
    </reaction>
</comment>
<comment type="pathway">
    <text evidence="1">Amino-acid degradation; L-arginine degradation via ADI pathway; carbamoyl phosphate from L-arginine: step 1/2.</text>
</comment>
<comment type="subcellular location">
    <subcellularLocation>
        <location evidence="1">Cytoplasm</location>
    </subcellularLocation>
</comment>
<comment type="similarity">
    <text evidence="1">Belongs to the arginine deiminase family.</text>
</comment>
<evidence type="ECO:0000255" key="1">
    <source>
        <dbReference type="HAMAP-Rule" id="MF_00242"/>
    </source>
</evidence>
<dbReference type="EC" id="3.5.3.6" evidence="1"/>
<dbReference type="EMBL" id="CP000993">
    <property type="protein sequence ID" value="ACH95062.1"/>
    <property type="molecule type" value="Genomic_DNA"/>
</dbReference>
<dbReference type="RefSeq" id="WP_012539214.1">
    <property type="nucleotide sequence ID" value="NC_011244.1"/>
</dbReference>
<dbReference type="SMR" id="B5RQH8"/>
<dbReference type="KEGG" id="bre:BRE_852"/>
<dbReference type="HOGENOM" id="CLU_052662_0_1_12"/>
<dbReference type="UniPathway" id="UPA00254">
    <property type="reaction ID" value="UER00364"/>
</dbReference>
<dbReference type="Proteomes" id="UP000000612">
    <property type="component" value="Chromosome"/>
</dbReference>
<dbReference type="GO" id="GO:0005737">
    <property type="term" value="C:cytoplasm"/>
    <property type="evidence" value="ECO:0007669"/>
    <property type="project" value="UniProtKB-SubCell"/>
</dbReference>
<dbReference type="GO" id="GO:0016990">
    <property type="term" value="F:arginine deiminase activity"/>
    <property type="evidence" value="ECO:0007669"/>
    <property type="project" value="UniProtKB-UniRule"/>
</dbReference>
<dbReference type="GO" id="GO:0019547">
    <property type="term" value="P:arginine catabolic process to ornithine"/>
    <property type="evidence" value="ECO:0007669"/>
    <property type="project" value="UniProtKB-UniRule"/>
</dbReference>
<dbReference type="GO" id="GO:0019546">
    <property type="term" value="P:arginine deiminase pathway"/>
    <property type="evidence" value="ECO:0007669"/>
    <property type="project" value="TreeGrafter"/>
</dbReference>
<dbReference type="Gene3D" id="1.10.3930.10">
    <property type="entry name" value="Arginine deiminase"/>
    <property type="match status" value="1"/>
</dbReference>
<dbReference type="Gene3D" id="3.75.10.10">
    <property type="entry name" value="L-arginine/glycine Amidinotransferase, Chain A"/>
    <property type="match status" value="1"/>
</dbReference>
<dbReference type="HAMAP" id="MF_00242">
    <property type="entry name" value="Arg_deiminase"/>
    <property type="match status" value="1"/>
</dbReference>
<dbReference type="InterPro" id="IPR003876">
    <property type="entry name" value="Arg_deiminase"/>
</dbReference>
<dbReference type="NCBIfam" id="TIGR01078">
    <property type="entry name" value="arcA"/>
    <property type="match status" value="1"/>
</dbReference>
<dbReference type="NCBIfam" id="NF002381">
    <property type="entry name" value="PRK01388.1"/>
    <property type="match status" value="1"/>
</dbReference>
<dbReference type="PANTHER" id="PTHR47271">
    <property type="entry name" value="ARGININE DEIMINASE"/>
    <property type="match status" value="1"/>
</dbReference>
<dbReference type="PANTHER" id="PTHR47271:SF2">
    <property type="entry name" value="ARGININE DEIMINASE"/>
    <property type="match status" value="1"/>
</dbReference>
<dbReference type="Pfam" id="PF02274">
    <property type="entry name" value="ADI"/>
    <property type="match status" value="1"/>
</dbReference>
<dbReference type="PIRSF" id="PIRSF006356">
    <property type="entry name" value="Arg_deiminase"/>
    <property type="match status" value="1"/>
</dbReference>
<dbReference type="PRINTS" id="PR01466">
    <property type="entry name" value="ARGDEIMINASE"/>
</dbReference>
<dbReference type="SUPFAM" id="SSF55909">
    <property type="entry name" value="Pentein"/>
    <property type="match status" value="1"/>
</dbReference>
<name>ARCA_BORRA</name>
<reference key="1">
    <citation type="journal article" date="2008" name="PLoS Genet.">
        <title>The genome of Borrelia recurrentis, the agent of deadly louse-borne relapsing fever, is a degraded subset of tick-borne Borrelia duttonii.</title>
        <authorList>
            <person name="Lescot M."/>
            <person name="Audic S."/>
            <person name="Robert C."/>
            <person name="Nguyen T.T."/>
            <person name="Blanc G."/>
            <person name="Cutler S.J."/>
            <person name="Wincker P."/>
            <person name="Couloux A."/>
            <person name="Claverie J.-M."/>
            <person name="Raoult D."/>
            <person name="Drancourt M."/>
        </authorList>
    </citation>
    <scope>NUCLEOTIDE SEQUENCE [LARGE SCALE GENOMIC DNA]</scope>
    <source>
        <strain>A1</strain>
    </source>
</reference>
<protein>
    <recommendedName>
        <fullName evidence="1">Arginine deiminase</fullName>
        <shortName evidence="1">ADI</shortName>
        <ecNumber evidence="1">3.5.3.6</ecNumber>
    </recommendedName>
    <alternativeName>
        <fullName evidence="1">Arginine dihydrolase</fullName>
        <shortName evidence="1">AD</shortName>
    </alternativeName>
</protein>
<sequence length="409" mass="46631">MQYLKPINVFSEIGRLKKVLLHRPGKELENLTPSIMKRLLFDDIPYLHVAIQEHDSFADTLRGNGVKVVYIEDLISETLSNDDSIKEQFISQFILEAGIRTENKTRALKDYFCNMSVNDMISNMIAGVTRDDLKNYKSDSLNSLVNSEYPLIIDPMPNILFTRDPFASIGHGVTINRMSTKTRHRETIFAEYIFKYHPIYKDNVPIWYNRDEDTTLEGGDELVLSRDVLAIGVSERTESESVEKVARKLFEQKISFNTILAFQIPQSRAYMHLDTVFTQIDHTTFTSFISDDMKFTIYALTYDVSSGSIKVKSEKAKLEDILGFYFGCKVNIIKCAGGDLIHGAREQWNDGANTLAISPGEVIVYSRNHMTNKLLEEFGIKVYQIPSSELSRGRGGPRCMSMPLIREDI</sequence>
<accession>B5RQH8</accession>
<proteinExistence type="inferred from homology"/>